<keyword id="KW-1157">Cap snatching</keyword>
<keyword id="KW-1262">Eukaryotic host gene expression shutoff by virus</keyword>
<keyword id="KW-1191">Eukaryotic host transcription shutoff by virus</keyword>
<keyword id="KW-1190">Host gene expression shutoff by virus</keyword>
<keyword id="KW-1045">Host mitochondrion</keyword>
<keyword id="KW-1048">Host nucleus</keyword>
<keyword id="KW-0945">Host-virus interaction</keyword>
<keyword id="KW-1090">Inhibition of host innate immune response by virus</keyword>
<keyword id="KW-1097">Inhibition of host MAVS by virus</keyword>
<keyword id="KW-1113">Inhibition of host RLR pathway by virus</keyword>
<keyword id="KW-1104">Inhibition of host RNA polymerase II by virus</keyword>
<keyword id="KW-0506">mRNA capping</keyword>
<keyword id="KW-0507">mRNA processing</keyword>
<keyword id="KW-0899">Viral immunoevasion</keyword>
<keyword id="KW-1195">Viral transcription</keyword>
<keyword id="KW-0946">Virion</keyword>
<organism>
    <name type="scientific">Influenza A virus (strain A/USA:Huston/AA/1945 H1N1)</name>
    <dbReference type="NCBI Taxonomy" id="425551"/>
    <lineage>
        <taxon>Viruses</taxon>
        <taxon>Riboviria</taxon>
        <taxon>Orthornavirae</taxon>
        <taxon>Negarnaviricota</taxon>
        <taxon>Polyploviricotina</taxon>
        <taxon>Insthoviricetes</taxon>
        <taxon>Articulavirales</taxon>
        <taxon>Orthomyxoviridae</taxon>
        <taxon>Alphainfluenzavirus</taxon>
        <taxon>Alphainfluenzavirus influenzae</taxon>
        <taxon>Influenza A virus</taxon>
    </lineage>
</organism>
<name>PB2_I45A0</name>
<feature type="chain" id="PRO_0000373034" description="Polymerase basic protein 2">
    <location>
        <begin position="1"/>
        <end position="759"/>
    </location>
</feature>
<feature type="short sequence motif" description="Nuclear localization signal" evidence="1">
    <location>
        <begin position="736"/>
        <end position="739"/>
    </location>
</feature>
<feature type="site" description="Mammalian adaptation" evidence="1">
    <location>
        <position position="627"/>
    </location>
</feature>
<organismHost>
    <name type="scientific">Aves</name>
    <dbReference type="NCBI Taxonomy" id="8782"/>
</organismHost>
<organismHost>
    <name type="scientific">Homo sapiens</name>
    <name type="common">Human</name>
    <dbReference type="NCBI Taxonomy" id="9606"/>
</organismHost>
<organismHost>
    <name type="scientific">Sus scrofa</name>
    <name type="common">Pig</name>
    <dbReference type="NCBI Taxonomy" id="9823"/>
</organismHost>
<comment type="function">
    <text evidence="1">Plays an essential role in transcription initiation and cap-stealing mechanism, in which cellular capped pre-mRNAs are used to generate primers for viral transcription. Recognizes and binds the 7-methylguanosine-containing cap of the target pre-RNA which is subsequently cleaved after 10-13 nucleotides by the viral protein PA. Plays a role in the initiation of the viral genome replication and modulates the activity of the ribonucleoprotein (RNP) complex. In addition, participates in the inhibition of type I interferon induction through interaction with and inhibition of the host mitochondrial antiviral signaling protein MAVS.</text>
</comment>
<comment type="subunit">
    <text evidence="1">Influenza RNA polymerase is composed of three subunits: PB1, PB2 and PA. Interacts (via N-terminus) with PB1 (via C-terminus). Interacts with nucleoprotein NP (via N-terminus). Interacts (via N-terminus) with host MAVS (via N-terminus); this interaction inhibits host innate immune response.</text>
</comment>
<comment type="subcellular location">
    <subcellularLocation>
        <location evidence="1">Virion</location>
    </subcellularLocation>
    <subcellularLocation>
        <location evidence="1">Host nucleus</location>
    </subcellularLocation>
    <subcellularLocation>
        <location evidence="1">Host mitochondrion</location>
    </subcellularLocation>
</comment>
<comment type="similarity">
    <text evidence="1">Belongs to the influenza viruses PB2 family.</text>
</comment>
<protein>
    <recommendedName>
        <fullName evidence="1">Polymerase basic protein 2</fullName>
    </recommendedName>
    <alternativeName>
        <fullName evidence="1">RNA-directed RNA polymerase subunit P3</fullName>
    </alternativeName>
</protein>
<sequence length="759" mass="86071">MERIKELRNLMSQSRTREILTKTTVDHMAIIKKYTSGRQEKNPSLRMKWMMAMKYPITADKRITEMIPERNDQGQTLWSKMNDAGSDRVMVSPLAVTWWNRNGPMTSTIHYPKIYKTYFEKVERLKHGTFGPVHFRNQVKIRRRVDINPGHADLSAKEAQDVIMEVVFPNEVGARILTSESQLTITKEKKEELKDCKISPLMVAYMLERELVRKTRFLPVAGGTSSVYIEVLHLTQGTCWEQMYTPGGEVRNDDIDQSLIIAARNIVRRAAVSADPLASLLEMCHSTQIGGTRMVDILRQNPTEEQAVDICKAAMGLRISSSFSFGGFTFKRTSGSSVKREEEVLTGNLQTLKIRVHEGYEEFTMVGRRATAILRKATRRLIQLIVSGRDEQSIAEAIIVAMVFSQEDCMIKAVRGDLNFVNRANQRLNPMHQLLRHFQKDAKVLFQNWGIEPIDNVMGMIGILPDMTPSTEMSMRGVRVSKMGVDEYSSAERVVVSIDRFLRVRDQRGNVLLSPEEVSETQGTEKLTITYSSSMMWEINGPESVLVNTYQWIIRNWETVKIQWSQNPTMLYNKMEFEPFQSLVPKAIRGQYSGFVRTLFQQMRDVLGTFDTTQIIKLLPFAAAPPKQSRMQFSSLTVNVRGSGMRILVRGNSPVFNYNKVTKRLTVLGKDAGTLTEDPDEGTAGVESAVLRGFLILGKEDRRYGPALSINELSNLAKGEKANVLIGQGDVVLVMKRKRDSSILTDSQTATKRIRMAIN</sequence>
<reference key="1">
    <citation type="submission" date="2007-04" db="EMBL/GenBank/DDBJ databases">
        <title>The NIAID influenza genome sequencing project.</title>
        <authorList>
            <person name="Ghedin E."/>
            <person name="Spiro D."/>
            <person name="Miller N."/>
            <person name="Zaborsky J."/>
            <person name="Feldblyum T."/>
            <person name="Subbu V."/>
            <person name="Shumway M."/>
            <person name="Sparenborg J."/>
            <person name="Groveman L."/>
            <person name="Halpin R."/>
            <person name="Sitz J."/>
            <person name="Koo H."/>
            <person name="Salzberg S.L."/>
            <person name="Webster R.G."/>
            <person name="Hoffmann E."/>
            <person name="Krauss S."/>
            <person name="Naeve C."/>
            <person name="Bao Y."/>
            <person name="Bolotov P."/>
            <person name="Dernovoy D."/>
            <person name="Kiryutin B."/>
            <person name="Lipman D.J."/>
            <person name="Tatusova T."/>
        </authorList>
    </citation>
    <scope>NUCLEOTIDE SEQUENCE [GENOMIC RNA]</scope>
</reference>
<reference key="2">
    <citation type="submission" date="2007-04" db="EMBL/GenBank/DDBJ databases">
        <authorList>
            <consortium name="The NIAID Influenza Genome Sequencing Consortium"/>
        </authorList>
    </citation>
    <scope>NUCLEOTIDE SEQUENCE [GENOMIC RNA]</scope>
</reference>
<evidence type="ECO:0000255" key="1">
    <source>
        <dbReference type="HAMAP-Rule" id="MF_04062"/>
    </source>
</evidence>
<gene>
    <name evidence="1" type="primary">PB2</name>
</gene>
<proteinExistence type="inferred from homology"/>
<accession>A4U6W2</accession>
<dbReference type="EMBL" id="CY021716">
    <property type="protein sequence ID" value="ABP49337.1"/>
    <property type="molecule type" value="Viral_cRNA"/>
</dbReference>
<dbReference type="SMR" id="A4U6W2"/>
<dbReference type="PRO" id="PR:A4U6W2"/>
<dbReference type="Proteomes" id="UP000008433">
    <property type="component" value="Genome"/>
</dbReference>
<dbReference type="GO" id="GO:0033650">
    <property type="term" value="C:host cell mitochondrion"/>
    <property type="evidence" value="ECO:0007669"/>
    <property type="project" value="UniProtKB-SubCell"/>
</dbReference>
<dbReference type="GO" id="GO:0042025">
    <property type="term" value="C:host cell nucleus"/>
    <property type="evidence" value="ECO:0007669"/>
    <property type="project" value="UniProtKB-SubCell"/>
</dbReference>
<dbReference type="GO" id="GO:0044423">
    <property type="term" value="C:virion component"/>
    <property type="evidence" value="ECO:0007669"/>
    <property type="project" value="UniProtKB-UniRule"/>
</dbReference>
<dbReference type="GO" id="GO:0003723">
    <property type="term" value="F:RNA binding"/>
    <property type="evidence" value="ECO:0007669"/>
    <property type="project" value="UniProtKB-UniRule"/>
</dbReference>
<dbReference type="GO" id="GO:0003968">
    <property type="term" value="F:RNA-directed RNA polymerase activity"/>
    <property type="evidence" value="ECO:0007669"/>
    <property type="project" value="UniProtKB-UniRule"/>
</dbReference>
<dbReference type="GO" id="GO:0006370">
    <property type="term" value="P:7-methylguanosine mRNA capping"/>
    <property type="evidence" value="ECO:0007669"/>
    <property type="project" value="UniProtKB-UniRule"/>
</dbReference>
<dbReference type="GO" id="GO:0075526">
    <property type="term" value="P:cap snatching"/>
    <property type="evidence" value="ECO:0007669"/>
    <property type="project" value="UniProtKB-UniRule"/>
</dbReference>
<dbReference type="GO" id="GO:0006351">
    <property type="term" value="P:DNA-templated transcription"/>
    <property type="evidence" value="ECO:0007669"/>
    <property type="project" value="UniProtKB-UniRule"/>
</dbReference>
<dbReference type="GO" id="GO:0039545">
    <property type="term" value="P:symbiont-mediated suppression of host cytoplasmic pattern recognition receptor signaling pathway via inhibition of MAVS activity"/>
    <property type="evidence" value="ECO:0007669"/>
    <property type="project" value="UniProtKB-UniRule"/>
</dbReference>
<dbReference type="GO" id="GO:0039657">
    <property type="term" value="P:symbiont-mediated suppression of host gene expression"/>
    <property type="evidence" value="ECO:0007669"/>
    <property type="project" value="UniProtKB-KW"/>
</dbReference>
<dbReference type="GO" id="GO:0039523">
    <property type="term" value="P:symbiont-mediated suppression of host mRNA transcription via inhibition of RNA polymerase II activity"/>
    <property type="evidence" value="ECO:0007669"/>
    <property type="project" value="UniProtKB-UniRule"/>
</dbReference>
<dbReference type="GO" id="GO:0039694">
    <property type="term" value="P:viral RNA genome replication"/>
    <property type="evidence" value="ECO:0007669"/>
    <property type="project" value="InterPro"/>
</dbReference>
<dbReference type="FunFam" id="3.30.30.90:FF:000001">
    <property type="entry name" value="Polymerase basic protein 2"/>
    <property type="match status" value="1"/>
</dbReference>
<dbReference type="Gene3D" id="3.30.30.90">
    <property type="entry name" value="Polymerase Basic Protein 2, C-terminal domain"/>
    <property type="match status" value="1"/>
</dbReference>
<dbReference type="HAMAP" id="MF_04062">
    <property type="entry name" value="INV_PB2"/>
    <property type="match status" value="1"/>
</dbReference>
<dbReference type="InterPro" id="IPR049110">
    <property type="entry name" value="Flu_PB2_2nd"/>
</dbReference>
<dbReference type="InterPro" id="IPR049114">
    <property type="entry name" value="Flu_PB2_6th"/>
</dbReference>
<dbReference type="InterPro" id="IPR049115">
    <property type="entry name" value="Flu_PB2_C"/>
</dbReference>
<dbReference type="InterPro" id="IPR048298">
    <property type="entry name" value="Flu_PB2_CAP-bd"/>
</dbReference>
<dbReference type="InterPro" id="IPR049111">
    <property type="entry name" value="Flu_PB2_middle"/>
</dbReference>
<dbReference type="InterPro" id="IPR049106">
    <property type="entry name" value="Flu_PB2_N"/>
</dbReference>
<dbReference type="InterPro" id="IPR001591">
    <property type="entry name" value="INV_PB2"/>
</dbReference>
<dbReference type="InterPro" id="IPR049113">
    <property type="entry name" value="PB2_helical"/>
</dbReference>
<dbReference type="InterPro" id="IPR037258">
    <property type="entry name" value="PDB2_C"/>
</dbReference>
<dbReference type="Pfam" id="PF20947">
    <property type="entry name" value="Flu_PB2_1st"/>
    <property type="match status" value="1"/>
</dbReference>
<dbReference type="Pfam" id="PF20948">
    <property type="entry name" value="Flu_PB2_2nd"/>
    <property type="match status" value="1"/>
</dbReference>
<dbReference type="Pfam" id="PF20949">
    <property type="entry name" value="Flu_PB2_3rd"/>
    <property type="match status" value="1"/>
</dbReference>
<dbReference type="Pfam" id="PF20950">
    <property type="entry name" value="Flu_PB2_4th"/>
    <property type="match status" value="1"/>
</dbReference>
<dbReference type="Pfam" id="PF00604">
    <property type="entry name" value="Flu_PB2_5th"/>
    <property type="match status" value="1"/>
</dbReference>
<dbReference type="Pfam" id="PF20951">
    <property type="entry name" value="Flu_PB2_6th"/>
    <property type="match status" value="1"/>
</dbReference>
<dbReference type="Pfam" id="PF20952">
    <property type="entry name" value="Flu_PB2_7th"/>
    <property type="match status" value="1"/>
</dbReference>
<dbReference type="SUPFAM" id="SSF160453">
    <property type="entry name" value="PB2 C-terminal domain-like"/>
    <property type="match status" value="1"/>
</dbReference>